<name>Y0081_MYCTU</name>
<comment type="induction">
    <text evidence="2 3 4 5">A member of the dormancy regulon. Induced in response to reduced oxygen tension (hypoxia), low levels of nitric oxide (NO) and carbon monoxide (CO). It is hoped that this regulon will give insight into the latent, or dormant phase of infection.</text>
</comment>
<comment type="biotechnology">
    <text evidence="6">This protein serves as an immunogenic antigen, inducing gamma-interferon responses in whole-blood cultures from M.tuberculosis-exposed adults in Uganda, The Gambia and South Africa, indicating this might be a good vaccine candidate.</text>
</comment>
<dbReference type="EMBL" id="AL123456">
    <property type="protein sequence ID" value="CCP42806.1"/>
    <property type="molecule type" value="Genomic_DNA"/>
</dbReference>
<dbReference type="PIR" id="B70850">
    <property type="entry name" value="B70850"/>
</dbReference>
<dbReference type="RefSeq" id="NP_214595.1">
    <property type="nucleotide sequence ID" value="NC_000962.3"/>
</dbReference>
<dbReference type="RefSeq" id="WP_003400657.1">
    <property type="nucleotide sequence ID" value="NZ_NVQJ01000005.1"/>
</dbReference>
<dbReference type="PDB" id="6JMI">
    <property type="method" value="X-ray"/>
    <property type="resolution" value="2.90 A"/>
    <property type="chains" value="A/B/C/D=2-114"/>
</dbReference>
<dbReference type="PDBsum" id="6JMI"/>
<dbReference type="SMR" id="P9WMI7"/>
<dbReference type="STRING" id="83332.Rv0081"/>
<dbReference type="PaxDb" id="83332-Rv0081"/>
<dbReference type="DNASU" id="887012"/>
<dbReference type="GeneID" id="887012"/>
<dbReference type="KEGG" id="mtu:Rv0081"/>
<dbReference type="KEGG" id="mtv:RVBD_0081"/>
<dbReference type="TubercuList" id="Rv0081"/>
<dbReference type="eggNOG" id="COG0640">
    <property type="taxonomic scope" value="Bacteria"/>
</dbReference>
<dbReference type="InParanoid" id="P9WMI7"/>
<dbReference type="OrthoDB" id="194599at2"/>
<dbReference type="PhylomeDB" id="P9WMI7"/>
<dbReference type="Proteomes" id="UP000001584">
    <property type="component" value="Chromosome"/>
</dbReference>
<dbReference type="GO" id="GO:0005886">
    <property type="term" value="C:plasma membrane"/>
    <property type="evidence" value="ECO:0007005"/>
    <property type="project" value="MTBBASE"/>
</dbReference>
<dbReference type="GO" id="GO:0003677">
    <property type="term" value="F:DNA binding"/>
    <property type="evidence" value="ECO:0007669"/>
    <property type="project" value="UniProtKB-KW"/>
</dbReference>
<dbReference type="GO" id="GO:0003700">
    <property type="term" value="F:DNA-binding transcription factor activity"/>
    <property type="evidence" value="ECO:0007669"/>
    <property type="project" value="InterPro"/>
</dbReference>
<dbReference type="CDD" id="cd00090">
    <property type="entry name" value="HTH_ARSR"/>
    <property type="match status" value="1"/>
</dbReference>
<dbReference type="FunFam" id="1.10.10.10:FF:000744">
    <property type="entry name" value="HTH-type transcriptional regulator"/>
    <property type="match status" value="1"/>
</dbReference>
<dbReference type="Gene3D" id="1.10.10.10">
    <property type="entry name" value="Winged helix-like DNA-binding domain superfamily/Winged helix DNA-binding domain"/>
    <property type="match status" value="1"/>
</dbReference>
<dbReference type="InterPro" id="IPR011991">
    <property type="entry name" value="ArsR-like_HTH"/>
</dbReference>
<dbReference type="InterPro" id="IPR001845">
    <property type="entry name" value="HTH_ArsR_DNA-bd_dom"/>
</dbReference>
<dbReference type="InterPro" id="IPR051011">
    <property type="entry name" value="Metal_resp_trans_reg"/>
</dbReference>
<dbReference type="InterPro" id="IPR036388">
    <property type="entry name" value="WH-like_DNA-bd_sf"/>
</dbReference>
<dbReference type="InterPro" id="IPR036390">
    <property type="entry name" value="WH_DNA-bd_sf"/>
</dbReference>
<dbReference type="NCBIfam" id="NF033788">
    <property type="entry name" value="HTH_metalloreg"/>
    <property type="match status" value="1"/>
</dbReference>
<dbReference type="PANTHER" id="PTHR43132">
    <property type="entry name" value="ARSENICAL RESISTANCE OPERON REPRESSOR ARSR-RELATED"/>
    <property type="match status" value="1"/>
</dbReference>
<dbReference type="PANTHER" id="PTHR43132:SF2">
    <property type="entry name" value="ARSENICAL RESISTANCE OPERON REPRESSOR ARSR-RELATED"/>
    <property type="match status" value="1"/>
</dbReference>
<dbReference type="Pfam" id="PF01022">
    <property type="entry name" value="HTH_5"/>
    <property type="match status" value="1"/>
</dbReference>
<dbReference type="PRINTS" id="PR00778">
    <property type="entry name" value="HTHARSR"/>
</dbReference>
<dbReference type="SMART" id="SM00418">
    <property type="entry name" value="HTH_ARSR"/>
    <property type="match status" value="1"/>
</dbReference>
<dbReference type="SUPFAM" id="SSF46785">
    <property type="entry name" value="Winged helix' DNA-binding domain"/>
    <property type="match status" value="1"/>
</dbReference>
<dbReference type="PROSITE" id="PS50987">
    <property type="entry name" value="HTH_ARSR_2"/>
    <property type="match status" value="1"/>
</dbReference>
<evidence type="ECO:0000255" key="1">
    <source>
        <dbReference type="PROSITE-ProRule" id="PRU00340"/>
    </source>
</evidence>
<evidence type="ECO:0000269" key="2">
    <source>
    </source>
</evidence>
<evidence type="ECO:0000269" key="3">
    <source>
    </source>
</evidence>
<evidence type="ECO:0000269" key="4">
    <source>
    </source>
</evidence>
<evidence type="ECO:0000269" key="5">
    <source>
    </source>
</evidence>
<evidence type="ECO:0000269" key="6">
    <source>
    </source>
</evidence>
<evidence type="ECO:0007829" key="7">
    <source>
        <dbReference type="PDB" id="6JMI"/>
    </source>
</evidence>
<keyword id="KW-0002">3D-structure</keyword>
<keyword id="KW-0238">DNA-binding</keyword>
<keyword id="KW-1185">Reference proteome</keyword>
<keyword id="KW-0804">Transcription</keyword>
<keyword id="KW-0805">Transcription regulation</keyword>
<organism>
    <name type="scientific">Mycobacterium tuberculosis (strain ATCC 25618 / H37Rv)</name>
    <dbReference type="NCBI Taxonomy" id="83332"/>
    <lineage>
        <taxon>Bacteria</taxon>
        <taxon>Bacillati</taxon>
        <taxon>Actinomycetota</taxon>
        <taxon>Actinomycetes</taxon>
        <taxon>Mycobacteriales</taxon>
        <taxon>Mycobacteriaceae</taxon>
        <taxon>Mycobacterium</taxon>
        <taxon>Mycobacterium tuberculosis complex</taxon>
    </lineage>
</organism>
<feature type="chain" id="PRO_0000392681" description="Uncharacterized HTH-type transcriptional regulator Rv0081">
    <location>
        <begin position="1"/>
        <end position="114"/>
    </location>
</feature>
<feature type="domain" description="HTH arsR-type" evidence="1">
    <location>
        <begin position="2"/>
        <end position="97"/>
    </location>
</feature>
<feature type="DNA-binding region" description="H-T-H motif" evidence="1">
    <location>
        <begin position="37"/>
        <end position="60"/>
    </location>
</feature>
<feature type="helix" evidence="7">
    <location>
        <begin position="5"/>
        <end position="16"/>
    </location>
</feature>
<feature type="helix" evidence="7">
    <location>
        <begin position="20"/>
        <end position="31"/>
    </location>
</feature>
<feature type="helix" evidence="7">
    <location>
        <begin position="36"/>
        <end position="40"/>
    </location>
</feature>
<feature type="helix" evidence="7">
    <location>
        <begin position="48"/>
        <end position="60"/>
    </location>
</feature>
<feature type="strand" evidence="7">
    <location>
        <begin position="63"/>
        <end position="79"/>
    </location>
</feature>
<feature type="helix" evidence="7">
    <location>
        <begin position="81"/>
        <end position="101"/>
    </location>
</feature>
<protein>
    <recommendedName>
        <fullName>Uncharacterized HTH-type transcriptional regulator Rv0081</fullName>
    </recommendedName>
</protein>
<reference key="1">
    <citation type="journal article" date="1998" name="Nature">
        <title>Deciphering the biology of Mycobacterium tuberculosis from the complete genome sequence.</title>
        <authorList>
            <person name="Cole S.T."/>
            <person name="Brosch R."/>
            <person name="Parkhill J."/>
            <person name="Garnier T."/>
            <person name="Churcher C.M."/>
            <person name="Harris D.E."/>
            <person name="Gordon S.V."/>
            <person name="Eiglmeier K."/>
            <person name="Gas S."/>
            <person name="Barry C.E. III"/>
            <person name="Tekaia F."/>
            <person name="Badcock K."/>
            <person name="Basham D."/>
            <person name="Brown D."/>
            <person name="Chillingworth T."/>
            <person name="Connor R."/>
            <person name="Davies R.M."/>
            <person name="Devlin K."/>
            <person name="Feltwell T."/>
            <person name="Gentles S."/>
            <person name="Hamlin N."/>
            <person name="Holroyd S."/>
            <person name="Hornsby T."/>
            <person name="Jagels K."/>
            <person name="Krogh A."/>
            <person name="McLean J."/>
            <person name="Moule S."/>
            <person name="Murphy L.D."/>
            <person name="Oliver S."/>
            <person name="Osborne J."/>
            <person name="Quail M.A."/>
            <person name="Rajandream M.A."/>
            <person name="Rogers J."/>
            <person name="Rutter S."/>
            <person name="Seeger K."/>
            <person name="Skelton S."/>
            <person name="Squares S."/>
            <person name="Squares R."/>
            <person name="Sulston J.E."/>
            <person name="Taylor K."/>
            <person name="Whitehead S."/>
            <person name="Barrell B.G."/>
        </authorList>
    </citation>
    <scope>NUCLEOTIDE SEQUENCE [LARGE SCALE GENOMIC DNA]</scope>
    <source>
        <strain>ATCC 25618 / H37Rv</strain>
    </source>
</reference>
<reference key="2">
    <citation type="journal article" date="2001" name="Proc. Natl. Acad. Sci. U.S.A.">
        <title>Regulation of the Mycobacterium tuberculosis hypoxic response gene encoding alpha -crystallin.</title>
        <authorList>
            <person name="Sherman D.R."/>
            <person name="Voskuil M."/>
            <person name="Schnappinger D."/>
            <person name="Liao R."/>
            <person name="Harrell M.I."/>
            <person name="Schoolnik G.K."/>
        </authorList>
    </citation>
    <scope>INDUCTION BY HYPOXIA</scope>
    <source>
        <strain>ATCC 25618 / H37Rv</strain>
    </source>
</reference>
<reference key="3">
    <citation type="journal article" date="2003" name="J. Exp. Med.">
        <title>Inhibition of respiration by nitric oxide induces a Mycobacterium tuberculosis dormancy program.</title>
        <authorList>
            <person name="Voskuil M.I."/>
            <person name="Schnappinger D."/>
            <person name="Visconti K.C."/>
            <person name="Harrell M.I."/>
            <person name="Dolganov G.M."/>
            <person name="Sherman D.R."/>
            <person name="Schoolnik G.K."/>
        </authorList>
    </citation>
    <scope>INDUCTION BY NITRIC OXIDE (NO) AND BY HYPOXIA</scope>
    <scope>DORMANCY REGULON</scope>
    <source>
        <strain>ATCC 25618 / H37Rv</strain>
    </source>
</reference>
<reference key="4">
    <citation type="journal article" date="2008" name="Cell Host Microbe">
        <title>Mycobacterium tuberculosis senses host-derived carbon monoxide during macrophage infection.</title>
        <authorList>
            <person name="Shiloh M.U."/>
            <person name="Manzanillo P."/>
            <person name="Cox J.S."/>
        </authorList>
    </citation>
    <scope>INDUCTION BY CARBON MONOXIDE (CO)</scope>
    <source>
        <strain>ATCC 35801 / TMC 107 / Erdman</strain>
    </source>
</reference>
<reference key="5">
    <citation type="journal article" date="2008" name="J. Biol. Chem.">
        <title>Heme oxygenase-1-derived carbon monoxide induces the Mycobacterium tuberculosis dormancy regulon.</title>
        <authorList>
            <person name="Kumar A."/>
            <person name="Deshane J.S."/>
            <person name="Crossman D.K."/>
            <person name="Bolisetty S."/>
            <person name="Yan B.S."/>
            <person name="Kramnik I."/>
            <person name="Agarwal A."/>
            <person name="Steyn A.J."/>
        </authorList>
    </citation>
    <scope>INDUCTION BY CARBON MONOXIDE (CO)</scope>
    <scope>DORMANCY REGULON</scope>
    <source>
        <strain>ATCC 25618 / H37Rv</strain>
    </source>
</reference>
<reference key="6">
    <citation type="journal article" date="2009" name="Clin. Vaccine Immunol.">
        <title>Immunogenicity of novel DosR regulon-encoded candidate antigens of Mycobacterium tuberculosis in three high-burden populations in Africa.</title>
        <authorList>
            <person name="Black G.F."/>
            <person name="Thiel B.A."/>
            <person name="Ota M.O."/>
            <person name="Parida S.K."/>
            <person name="Adegbola R."/>
            <person name="Boom W.H."/>
            <person name="Dockrell H.M."/>
            <person name="Franken K.L."/>
            <person name="Friggen A.H."/>
            <person name="Hill P.C."/>
            <person name="Klein M.R."/>
            <person name="Lalor M.K."/>
            <person name="Mayanja H."/>
            <person name="Schoolnik G."/>
            <person name="Stanley K."/>
            <person name="Weldingh K."/>
            <person name="Kaufmann S.H."/>
            <person name="Walzl G."/>
            <person name="Ottenhoff T.H."/>
        </authorList>
    </citation>
    <scope>BIOTECHNOLOGY</scope>
</reference>
<reference key="7">
    <citation type="journal article" date="2011" name="Mol. Cell. Proteomics">
        <title>Proteogenomic analysis of Mycobacterium tuberculosis by high resolution mass spectrometry.</title>
        <authorList>
            <person name="Kelkar D.S."/>
            <person name="Kumar D."/>
            <person name="Kumar P."/>
            <person name="Balakrishnan L."/>
            <person name="Muthusamy B."/>
            <person name="Yadav A.K."/>
            <person name="Shrivastava P."/>
            <person name="Marimuthu A."/>
            <person name="Anand S."/>
            <person name="Sundaram H."/>
            <person name="Kingsbury R."/>
            <person name="Harsha H.C."/>
            <person name="Nair B."/>
            <person name="Prasad T.S."/>
            <person name="Chauhan D.S."/>
            <person name="Katoch K."/>
            <person name="Katoch V.M."/>
            <person name="Kumar P."/>
            <person name="Chaerkady R."/>
            <person name="Ramachandran S."/>
            <person name="Dash D."/>
            <person name="Pandey A."/>
        </authorList>
    </citation>
    <scope>IDENTIFICATION BY MASS SPECTROMETRY [LARGE SCALE ANALYSIS]</scope>
    <source>
        <strain>ATCC 25618 / H37Rv</strain>
    </source>
</reference>
<accession>P9WMI7</accession>
<accession>L0T5M3</accession>
<accession>O53626</accession>
<accession>Q7DAH4</accession>
<gene>
    <name type="ordered locus">Rv0081</name>
</gene>
<sequence>MESEPLYKLKAEFFKTLAHPARIRILELLVERDRSVGELLSSDVGLESSNLSQQLGVLRRAGVVAARRDGNAMIYSIAAPDIAELLAVARKVLARVLSDRVAVLEDLRAGGSAT</sequence>
<proteinExistence type="evidence at protein level"/>